<gene>
    <name evidence="1" type="primary">lgt</name>
    <name type="ordered locus">PSEEN5235</name>
</gene>
<proteinExistence type="inferred from homology"/>
<feature type="chain" id="PRO_1000053476" description="Phosphatidylglycerol--prolipoprotein diacylglyceryl transferase">
    <location>
        <begin position="1"/>
        <end position="269"/>
    </location>
</feature>
<feature type="transmembrane region" description="Helical" evidence="1">
    <location>
        <begin position="17"/>
        <end position="37"/>
    </location>
</feature>
<feature type="transmembrane region" description="Helical" evidence="1">
    <location>
        <begin position="56"/>
        <end position="76"/>
    </location>
</feature>
<feature type="transmembrane region" description="Helical" evidence="1">
    <location>
        <begin position="92"/>
        <end position="112"/>
    </location>
</feature>
<feature type="transmembrane region" description="Helical" evidence="1">
    <location>
        <begin position="120"/>
        <end position="140"/>
    </location>
</feature>
<feature type="transmembrane region" description="Helical" evidence="1">
    <location>
        <begin position="174"/>
        <end position="194"/>
    </location>
</feature>
<feature type="transmembrane region" description="Helical" evidence="1">
    <location>
        <begin position="202"/>
        <end position="222"/>
    </location>
</feature>
<feature type="transmembrane region" description="Helical" evidence="1">
    <location>
        <begin position="237"/>
        <end position="257"/>
    </location>
</feature>
<feature type="binding site" evidence="1">
    <location>
        <position position="139"/>
    </location>
    <ligand>
        <name>a 1,2-diacyl-sn-glycero-3-phospho-(1'-sn-glycerol)</name>
        <dbReference type="ChEBI" id="CHEBI:64716"/>
    </ligand>
</feature>
<protein>
    <recommendedName>
        <fullName evidence="1">Phosphatidylglycerol--prolipoprotein diacylglyceryl transferase</fullName>
        <ecNumber evidence="1">2.5.1.145</ecNumber>
    </recommendedName>
</protein>
<name>LGT_PSEE4</name>
<dbReference type="EC" id="2.5.1.145" evidence="1"/>
<dbReference type="EMBL" id="CT573326">
    <property type="protein sequence ID" value="CAK17860.1"/>
    <property type="molecule type" value="Genomic_DNA"/>
</dbReference>
<dbReference type="RefSeq" id="WP_011536219.1">
    <property type="nucleotide sequence ID" value="NC_008027.1"/>
</dbReference>
<dbReference type="SMR" id="Q1I3C6"/>
<dbReference type="STRING" id="384676.PSEEN5235"/>
<dbReference type="GeneID" id="32808161"/>
<dbReference type="KEGG" id="pen:PSEEN5235"/>
<dbReference type="eggNOG" id="COG0682">
    <property type="taxonomic scope" value="Bacteria"/>
</dbReference>
<dbReference type="HOGENOM" id="CLU_013386_1_0_6"/>
<dbReference type="OrthoDB" id="871140at2"/>
<dbReference type="UniPathway" id="UPA00664"/>
<dbReference type="Proteomes" id="UP000000658">
    <property type="component" value="Chromosome"/>
</dbReference>
<dbReference type="GO" id="GO:0005886">
    <property type="term" value="C:plasma membrane"/>
    <property type="evidence" value="ECO:0007669"/>
    <property type="project" value="UniProtKB-SubCell"/>
</dbReference>
<dbReference type="GO" id="GO:0008961">
    <property type="term" value="F:phosphatidylglycerol-prolipoprotein diacylglyceryl transferase activity"/>
    <property type="evidence" value="ECO:0007669"/>
    <property type="project" value="UniProtKB-UniRule"/>
</dbReference>
<dbReference type="GO" id="GO:0042158">
    <property type="term" value="P:lipoprotein biosynthetic process"/>
    <property type="evidence" value="ECO:0007669"/>
    <property type="project" value="UniProtKB-UniRule"/>
</dbReference>
<dbReference type="HAMAP" id="MF_01147">
    <property type="entry name" value="Lgt"/>
    <property type="match status" value="1"/>
</dbReference>
<dbReference type="InterPro" id="IPR001640">
    <property type="entry name" value="Lgt"/>
</dbReference>
<dbReference type="NCBIfam" id="TIGR00544">
    <property type="entry name" value="lgt"/>
    <property type="match status" value="1"/>
</dbReference>
<dbReference type="PANTHER" id="PTHR30589:SF0">
    <property type="entry name" value="PHOSPHATIDYLGLYCEROL--PROLIPOPROTEIN DIACYLGLYCERYL TRANSFERASE"/>
    <property type="match status" value="1"/>
</dbReference>
<dbReference type="PANTHER" id="PTHR30589">
    <property type="entry name" value="PROLIPOPROTEIN DIACYLGLYCERYL TRANSFERASE"/>
    <property type="match status" value="1"/>
</dbReference>
<dbReference type="Pfam" id="PF01790">
    <property type="entry name" value="LGT"/>
    <property type="match status" value="1"/>
</dbReference>
<dbReference type="PROSITE" id="PS01311">
    <property type="entry name" value="LGT"/>
    <property type="match status" value="1"/>
</dbReference>
<organism>
    <name type="scientific">Pseudomonas entomophila (strain L48)</name>
    <dbReference type="NCBI Taxonomy" id="384676"/>
    <lineage>
        <taxon>Bacteria</taxon>
        <taxon>Pseudomonadati</taxon>
        <taxon>Pseudomonadota</taxon>
        <taxon>Gammaproteobacteria</taxon>
        <taxon>Pseudomonadales</taxon>
        <taxon>Pseudomonadaceae</taxon>
        <taxon>Pseudomonas</taxon>
    </lineage>
</organism>
<sequence length="269" mass="30320">MLPYPQIDPVAVALGPLKIHWYGLMYLIGIGGAWLLASRRLNRFDPTWSREKLSDLVFWLSMGVIVGGRLGYVLFYDLHQYLANPTLIFEVWKGGMSFHGGFIGVMLAALWFGKRNNKSFFELMDFVAPLVPIGLGAGRIGNFINAELWGKATDVPWAMVFPPFSDPAQLPRHPSQLYQFALEGVALFVILWLYSRKPRPTMAVSGMFALFYGIFRFIVEFVRVPDAQLGYIAFGWLTMGQLLCVPMIVGGIFLIWLAYNRKPTAKATV</sequence>
<evidence type="ECO:0000255" key="1">
    <source>
        <dbReference type="HAMAP-Rule" id="MF_01147"/>
    </source>
</evidence>
<accession>Q1I3C6</accession>
<reference key="1">
    <citation type="journal article" date="2006" name="Nat. Biotechnol.">
        <title>Complete genome sequence of the entomopathogenic and metabolically versatile soil bacterium Pseudomonas entomophila.</title>
        <authorList>
            <person name="Vodovar N."/>
            <person name="Vallenet D."/>
            <person name="Cruveiller S."/>
            <person name="Rouy Z."/>
            <person name="Barbe V."/>
            <person name="Acosta C."/>
            <person name="Cattolico L."/>
            <person name="Jubin C."/>
            <person name="Lajus A."/>
            <person name="Segurens B."/>
            <person name="Vacherie B."/>
            <person name="Wincker P."/>
            <person name="Weissenbach J."/>
            <person name="Lemaitre B."/>
            <person name="Medigue C."/>
            <person name="Boccard F."/>
        </authorList>
    </citation>
    <scope>NUCLEOTIDE SEQUENCE [LARGE SCALE GENOMIC DNA]</scope>
    <source>
        <strain>L48</strain>
    </source>
</reference>
<comment type="function">
    <text evidence="1">Catalyzes the transfer of the diacylglyceryl group from phosphatidylglycerol to the sulfhydryl group of the N-terminal cysteine of a prolipoprotein, the first step in the formation of mature lipoproteins.</text>
</comment>
<comment type="catalytic activity">
    <reaction evidence="1">
        <text>L-cysteinyl-[prolipoprotein] + a 1,2-diacyl-sn-glycero-3-phospho-(1'-sn-glycerol) = an S-1,2-diacyl-sn-glyceryl-L-cysteinyl-[prolipoprotein] + sn-glycerol 1-phosphate + H(+)</text>
        <dbReference type="Rhea" id="RHEA:56712"/>
        <dbReference type="Rhea" id="RHEA-COMP:14679"/>
        <dbReference type="Rhea" id="RHEA-COMP:14680"/>
        <dbReference type="ChEBI" id="CHEBI:15378"/>
        <dbReference type="ChEBI" id="CHEBI:29950"/>
        <dbReference type="ChEBI" id="CHEBI:57685"/>
        <dbReference type="ChEBI" id="CHEBI:64716"/>
        <dbReference type="ChEBI" id="CHEBI:140658"/>
        <dbReference type="EC" id="2.5.1.145"/>
    </reaction>
</comment>
<comment type="pathway">
    <text evidence="1">Protein modification; lipoprotein biosynthesis (diacylglyceryl transfer).</text>
</comment>
<comment type="subcellular location">
    <subcellularLocation>
        <location evidence="1">Cell inner membrane</location>
        <topology evidence="1">Multi-pass membrane protein</topology>
    </subcellularLocation>
</comment>
<comment type="similarity">
    <text evidence="1">Belongs to the Lgt family.</text>
</comment>
<keyword id="KW-0997">Cell inner membrane</keyword>
<keyword id="KW-1003">Cell membrane</keyword>
<keyword id="KW-0472">Membrane</keyword>
<keyword id="KW-0808">Transferase</keyword>
<keyword id="KW-0812">Transmembrane</keyword>
<keyword id="KW-1133">Transmembrane helix</keyword>